<dbReference type="EC" id="6.3.4.3" evidence="1"/>
<dbReference type="EMBL" id="CP000961">
    <property type="protein sequence ID" value="ACA88592.1"/>
    <property type="molecule type" value="Genomic_DNA"/>
</dbReference>
<dbReference type="RefSeq" id="WP_012326918.1">
    <property type="nucleotide sequence ID" value="NC_010506.1"/>
</dbReference>
<dbReference type="SMR" id="B1KJC0"/>
<dbReference type="STRING" id="392500.Swoo_4339"/>
<dbReference type="KEGG" id="swd:Swoo_4339"/>
<dbReference type="eggNOG" id="COG2759">
    <property type="taxonomic scope" value="Bacteria"/>
</dbReference>
<dbReference type="HOGENOM" id="CLU_003601_3_3_6"/>
<dbReference type="UniPathway" id="UPA00193"/>
<dbReference type="Proteomes" id="UP000002168">
    <property type="component" value="Chromosome"/>
</dbReference>
<dbReference type="GO" id="GO:0005524">
    <property type="term" value="F:ATP binding"/>
    <property type="evidence" value="ECO:0007669"/>
    <property type="project" value="UniProtKB-UniRule"/>
</dbReference>
<dbReference type="GO" id="GO:0004329">
    <property type="term" value="F:formate-tetrahydrofolate ligase activity"/>
    <property type="evidence" value="ECO:0007669"/>
    <property type="project" value="UniProtKB-UniRule"/>
</dbReference>
<dbReference type="GO" id="GO:0035999">
    <property type="term" value="P:tetrahydrofolate interconversion"/>
    <property type="evidence" value="ECO:0007669"/>
    <property type="project" value="UniProtKB-UniRule"/>
</dbReference>
<dbReference type="CDD" id="cd00477">
    <property type="entry name" value="FTHFS"/>
    <property type="match status" value="1"/>
</dbReference>
<dbReference type="FunFam" id="3.10.410.10:FF:000001">
    <property type="entry name" value="Putative formate--tetrahydrofolate ligase"/>
    <property type="match status" value="1"/>
</dbReference>
<dbReference type="Gene3D" id="3.30.1510.10">
    <property type="entry name" value="Domain 2, N(10)-formyltetrahydrofolate synthetase"/>
    <property type="match status" value="1"/>
</dbReference>
<dbReference type="Gene3D" id="3.10.410.10">
    <property type="entry name" value="Formyltetrahydrofolate synthetase, domain 3"/>
    <property type="match status" value="1"/>
</dbReference>
<dbReference type="Gene3D" id="3.40.50.300">
    <property type="entry name" value="P-loop containing nucleotide triphosphate hydrolases"/>
    <property type="match status" value="1"/>
</dbReference>
<dbReference type="HAMAP" id="MF_01543">
    <property type="entry name" value="FTHFS"/>
    <property type="match status" value="1"/>
</dbReference>
<dbReference type="InterPro" id="IPR000559">
    <property type="entry name" value="Formate_THF_ligase"/>
</dbReference>
<dbReference type="InterPro" id="IPR020628">
    <property type="entry name" value="Formate_THF_ligase_CS"/>
</dbReference>
<dbReference type="InterPro" id="IPR027417">
    <property type="entry name" value="P-loop_NTPase"/>
</dbReference>
<dbReference type="NCBIfam" id="NF010030">
    <property type="entry name" value="PRK13505.1"/>
    <property type="match status" value="1"/>
</dbReference>
<dbReference type="NCBIfam" id="NF010031">
    <property type="entry name" value="PRK13506.1"/>
    <property type="match status" value="1"/>
</dbReference>
<dbReference type="Pfam" id="PF01268">
    <property type="entry name" value="FTHFS"/>
    <property type="match status" value="1"/>
</dbReference>
<dbReference type="SUPFAM" id="SSF52540">
    <property type="entry name" value="P-loop containing nucleoside triphosphate hydrolases"/>
    <property type="match status" value="1"/>
</dbReference>
<dbReference type="PROSITE" id="PS00721">
    <property type="entry name" value="FTHFS_1"/>
    <property type="match status" value="1"/>
</dbReference>
<keyword id="KW-0067">ATP-binding</keyword>
<keyword id="KW-0436">Ligase</keyword>
<keyword id="KW-0547">Nucleotide-binding</keyword>
<keyword id="KW-0554">One-carbon metabolism</keyword>
<keyword id="KW-1185">Reference proteome</keyword>
<feature type="chain" id="PRO_1000196824" description="Formate--tetrahydrofolate ligase">
    <location>
        <begin position="1"/>
        <end position="570"/>
    </location>
</feature>
<feature type="binding site" evidence="1">
    <location>
        <begin position="65"/>
        <end position="72"/>
    </location>
    <ligand>
        <name>ATP</name>
        <dbReference type="ChEBI" id="CHEBI:30616"/>
    </ligand>
</feature>
<sequence>MLTDIEISRQATPQPISDIAKKFGIKKDELSQFGDAKAKVKISILDRVKDNVEGKLVIVTAVTPTPFGEGKTVTSIGLTQGLNAIGRKTCACIRQPSMGPVFGIKGGAAGGGYSQVIPMEEMNLHLTGDIHAVSSAHNLAAAAVDARLFHESRLSADEYTLQSGSAPLNIDPEQILWRRVVDHNERSLRNITVGLGDINGPVHASGFDITAASELMAILALSHDLKDMRKRIGRLVLALDKHAQPITAEMIGVAGAMTVIMSNAIEPTLMQTLTGDPCLIHAGPFANIAHGNSSIIADRIALKFADFVVTEGGFGSDMGFEKFCNIKVRESGKAPDAAVLVVTLKALKANSGLESKQDINLPDQARLEAGFLNLKWHMDNVSQYGVPVVVALNRFPSDTQEELEWLKREVMLAGAFGCEISDAFSLGANGAEALAHKVVEATEQDSDFRLLYSSDASIEAKLLTIAESGYGARGVVLSDEAKAQLEQIKAMGLDNLAVCIAKTPLSISHDPLLKGVPQGFELPIAQLKINAGAGFITALVGKVMTMPGLGVKPGYLNIDINEQDEIVGLA</sequence>
<name>FTHS_SHEWM</name>
<protein>
    <recommendedName>
        <fullName evidence="1">Formate--tetrahydrofolate ligase</fullName>
        <ecNumber evidence="1">6.3.4.3</ecNumber>
    </recommendedName>
    <alternativeName>
        <fullName evidence="1">Formyltetrahydrofolate synthetase</fullName>
        <shortName evidence="1">FHS</shortName>
        <shortName evidence="1">FTHFS</shortName>
    </alternativeName>
</protein>
<reference key="1">
    <citation type="submission" date="2008-02" db="EMBL/GenBank/DDBJ databases">
        <title>Complete sequence of Shewanella woodyi ATCC 51908.</title>
        <authorList>
            <consortium name="US DOE Joint Genome Institute"/>
            <person name="Copeland A."/>
            <person name="Lucas S."/>
            <person name="Lapidus A."/>
            <person name="Glavina del Rio T."/>
            <person name="Dalin E."/>
            <person name="Tice H."/>
            <person name="Bruce D."/>
            <person name="Goodwin L."/>
            <person name="Pitluck S."/>
            <person name="Sims D."/>
            <person name="Brettin T."/>
            <person name="Detter J.C."/>
            <person name="Han C."/>
            <person name="Kuske C.R."/>
            <person name="Schmutz J."/>
            <person name="Larimer F."/>
            <person name="Land M."/>
            <person name="Hauser L."/>
            <person name="Kyrpides N."/>
            <person name="Lykidis A."/>
            <person name="Zhao J.-S."/>
            <person name="Richardson P."/>
        </authorList>
    </citation>
    <scope>NUCLEOTIDE SEQUENCE [LARGE SCALE GENOMIC DNA]</scope>
    <source>
        <strain>ATCC 51908 / MS32</strain>
    </source>
</reference>
<gene>
    <name evidence="1" type="primary">fhs</name>
    <name type="ordered locus">Swoo_4339</name>
</gene>
<accession>B1KJC0</accession>
<organism>
    <name type="scientific">Shewanella woodyi (strain ATCC 51908 / MS32)</name>
    <dbReference type="NCBI Taxonomy" id="392500"/>
    <lineage>
        <taxon>Bacteria</taxon>
        <taxon>Pseudomonadati</taxon>
        <taxon>Pseudomonadota</taxon>
        <taxon>Gammaproteobacteria</taxon>
        <taxon>Alteromonadales</taxon>
        <taxon>Shewanellaceae</taxon>
        <taxon>Shewanella</taxon>
    </lineage>
</organism>
<comment type="catalytic activity">
    <reaction evidence="1">
        <text>(6S)-5,6,7,8-tetrahydrofolate + formate + ATP = (6R)-10-formyltetrahydrofolate + ADP + phosphate</text>
        <dbReference type="Rhea" id="RHEA:20221"/>
        <dbReference type="ChEBI" id="CHEBI:15740"/>
        <dbReference type="ChEBI" id="CHEBI:30616"/>
        <dbReference type="ChEBI" id="CHEBI:43474"/>
        <dbReference type="ChEBI" id="CHEBI:57453"/>
        <dbReference type="ChEBI" id="CHEBI:195366"/>
        <dbReference type="ChEBI" id="CHEBI:456216"/>
        <dbReference type="EC" id="6.3.4.3"/>
    </reaction>
</comment>
<comment type="pathway">
    <text evidence="1">One-carbon metabolism; tetrahydrofolate interconversion.</text>
</comment>
<comment type="similarity">
    <text evidence="1">Belongs to the formate--tetrahydrofolate ligase family.</text>
</comment>
<evidence type="ECO:0000255" key="1">
    <source>
        <dbReference type="HAMAP-Rule" id="MF_01543"/>
    </source>
</evidence>
<proteinExistence type="inferred from homology"/>